<keyword id="KW-0687">Ribonucleoprotein</keyword>
<keyword id="KW-0689">Ribosomal protein</keyword>
<keyword id="KW-0694">RNA-binding</keyword>
<keyword id="KW-0699">rRNA-binding</keyword>
<dbReference type="EMBL" id="CP000261">
    <property type="protein sequence ID" value="ABF35118.1"/>
    <property type="molecule type" value="Genomic_DNA"/>
</dbReference>
<dbReference type="SMR" id="Q1JE40"/>
<dbReference type="KEGG" id="spj:MGAS2096_Spy0066"/>
<dbReference type="HOGENOM" id="CLU_055188_4_2_9"/>
<dbReference type="GO" id="GO:0022625">
    <property type="term" value="C:cytosolic large ribosomal subunit"/>
    <property type="evidence" value="ECO:0007669"/>
    <property type="project" value="TreeGrafter"/>
</dbReference>
<dbReference type="GO" id="GO:0019843">
    <property type="term" value="F:rRNA binding"/>
    <property type="evidence" value="ECO:0007669"/>
    <property type="project" value="UniProtKB-UniRule"/>
</dbReference>
<dbReference type="GO" id="GO:0003735">
    <property type="term" value="F:structural constituent of ribosome"/>
    <property type="evidence" value="ECO:0007669"/>
    <property type="project" value="InterPro"/>
</dbReference>
<dbReference type="GO" id="GO:0006412">
    <property type="term" value="P:translation"/>
    <property type="evidence" value="ECO:0007669"/>
    <property type="project" value="UniProtKB-UniRule"/>
</dbReference>
<dbReference type="Gene3D" id="3.100.10.10">
    <property type="match status" value="1"/>
</dbReference>
<dbReference type="HAMAP" id="MF_01341">
    <property type="entry name" value="Ribosomal_uL15"/>
    <property type="match status" value="1"/>
</dbReference>
<dbReference type="InterPro" id="IPR030878">
    <property type="entry name" value="Ribosomal_uL15"/>
</dbReference>
<dbReference type="InterPro" id="IPR021131">
    <property type="entry name" value="Ribosomal_uL15/eL18"/>
</dbReference>
<dbReference type="InterPro" id="IPR036227">
    <property type="entry name" value="Ribosomal_uL15/eL18_sf"/>
</dbReference>
<dbReference type="InterPro" id="IPR005749">
    <property type="entry name" value="Ribosomal_uL15_bac-type"/>
</dbReference>
<dbReference type="InterPro" id="IPR001196">
    <property type="entry name" value="Ribosomal_uL15_CS"/>
</dbReference>
<dbReference type="NCBIfam" id="TIGR01071">
    <property type="entry name" value="rplO_bact"/>
    <property type="match status" value="1"/>
</dbReference>
<dbReference type="PANTHER" id="PTHR12934">
    <property type="entry name" value="50S RIBOSOMAL PROTEIN L15"/>
    <property type="match status" value="1"/>
</dbReference>
<dbReference type="PANTHER" id="PTHR12934:SF11">
    <property type="entry name" value="LARGE RIBOSOMAL SUBUNIT PROTEIN UL15M"/>
    <property type="match status" value="1"/>
</dbReference>
<dbReference type="Pfam" id="PF00828">
    <property type="entry name" value="Ribosomal_L27A"/>
    <property type="match status" value="1"/>
</dbReference>
<dbReference type="SUPFAM" id="SSF52080">
    <property type="entry name" value="Ribosomal proteins L15p and L18e"/>
    <property type="match status" value="1"/>
</dbReference>
<dbReference type="PROSITE" id="PS00475">
    <property type="entry name" value="RIBOSOMAL_L15"/>
    <property type="match status" value="1"/>
</dbReference>
<feature type="chain" id="PRO_0000251569" description="Large ribosomal subunit protein uL15">
    <location>
        <begin position="1"/>
        <end position="146"/>
    </location>
</feature>
<feature type="region of interest" description="Disordered" evidence="2">
    <location>
        <begin position="1"/>
        <end position="51"/>
    </location>
</feature>
<feature type="compositionally biased region" description="Basic and acidic residues" evidence="2">
    <location>
        <begin position="1"/>
        <end position="13"/>
    </location>
</feature>
<feature type="compositionally biased region" description="Gly residues" evidence="2">
    <location>
        <begin position="23"/>
        <end position="35"/>
    </location>
</feature>
<feature type="compositionally biased region" description="Gly residues" evidence="2">
    <location>
        <begin position="42"/>
        <end position="51"/>
    </location>
</feature>
<sequence>MKLHELKAAEGSRKVRNRVGRGTSSGNGKTSGRGQKGQKARSGGGVRLGFEGGQTPLFRRIPKRGFTNINTKEYALVNLDQLNVFDDGTEVTPAILKDAGIVRAEKSGVKVLGNGELTKKLTVKAAKFSKSAEAAIIAKGGSIEVI</sequence>
<comment type="function">
    <text evidence="1">Binds to the 23S rRNA.</text>
</comment>
<comment type="subunit">
    <text evidence="1">Part of the 50S ribosomal subunit.</text>
</comment>
<comment type="similarity">
    <text evidence="1">Belongs to the universal ribosomal protein uL15 family.</text>
</comment>
<proteinExistence type="inferred from homology"/>
<evidence type="ECO:0000255" key="1">
    <source>
        <dbReference type="HAMAP-Rule" id="MF_01341"/>
    </source>
</evidence>
<evidence type="ECO:0000256" key="2">
    <source>
        <dbReference type="SAM" id="MobiDB-lite"/>
    </source>
</evidence>
<evidence type="ECO:0000305" key="3"/>
<gene>
    <name evidence="1" type="primary">rplO</name>
    <name type="ordered locus">MGAS2096_Spy0066</name>
</gene>
<protein>
    <recommendedName>
        <fullName evidence="1">Large ribosomal subunit protein uL15</fullName>
    </recommendedName>
    <alternativeName>
        <fullName evidence="3">50S ribosomal protein L15</fullName>
    </alternativeName>
</protein>
<name>RL15_STRPB</name>
<accession>Q1JE40</accession>
<organism>
    <name type="scientific">Streptococcus pyogenes serotype M12 (strain MGAS2096)</name>
    <dbReference type="NCBI Taxonomy" id="370553"/>
    <lineage>
        <taxon>Bacteria</taxon>
        <taxon>Bacillati</taxon>
        <taxon>Bacillota</taxon>
        <taxon>Bacilli</taxon>
        <taxon>Lactobacillales</taxon>
        <taxon>Streptococcaceae</taxon>
        <taxon>Streptococcus</taxon>
    </lineage>
</organism>
<reference key="1">
    <citation type="journal article" date="2006" name="Proc. Natl. Acad. Sci. U.S.A.">
        <title>Molecular genetic anatomy of inter- and intraserotype variation in the human bacterial pathogen group A Streptococcus.</title>
        <authorList>
            <person name="Beres S.B."/>
            <person name="Richter E.W."/>
            <person name="Nagiec M.J."/>
            <person name="Sumby P."/>
            <person name="Porcella S.F."/>
            <person name="DeLeo F.R."/>
            <person name="Musser J.M."/>
        </authorList>
    </citation>
    <scope>NUCLEOTIDE SEQUENCE [LARGE SCALE GENOMIC DNA]</scope>
    <source>
        <strain>MGAS2096</strain>
    </source>
</reference>